<name>YQGF_DEIRA</name>
<sequence>MLARMSGPDPAPAALPTVLALDVSKSRIGFAVSAGRLAFGRGSVDRKRLPLDLKAVRLKVEETGAERLVLGLPLRTDGKPSPTADRVRAFGRVLMDKGYTVEYQDERFTTQRARALGAADEDEAAAVQILELWLMR</sequence>
<feature type="chain" id="PRO_0000172056" description="Ribonuclease YqgF">
    <location>
        <begin position="1"/>
        <end position="136"/>
    </location>
</feature>
<feature type="mutagenesis site" description="Significantly reduced RNase activity." evidence="2">
    <original>D</original>
    <variation>A</variation>
    <location>
        <position position="22"/>
    </location>
</feature>
<feature type="mutagenesis site" description="Loss of RNase activity." evidence="2">
    <original>E</original>
    <variation>A</variation>
    <location>
        <position position="106"/>
    </location>
</feature>
<feature type="mutagenesis site" description="Loss of RNase activity." evidence="2">
    <original>D</original>
    <variation>A</variation>
    <location>
        <position position="122"/>
    </location>
</feature>
<feature type="strand" evidence="5">
    <location>
        <begin position="18"/>
        <end position="23"/>
    </location>
</feature>
<feature type="strand" evidence="5">
    <location>
        <begin position="25"/>
        <end position="34"/>
    </location>
</feature>
<feature type="strand" evidence="5">
    <location>
        <begin position="37"/>
        <end position="45"/>
    </location>
</feature>
<feature type="helix" evidence="5">
    <location>
        <begin position="49"/>
        <end position="63"/>
    </location>
</feature>
<feature type="strand" evidence="5">
    <location>
        <begin position="66"/>
        <end position="74"/>
    </location>
</feature>
<feature type="helix" evidence="5">
    <location>
        <begin position="82"/>
        <end position="96"/>
    </location>
</feature>
<feature type="strand" evidence="5">
    <location>
        <begin position="101"/>
        <end position="106"/>
    </location>
</feature>
<feature type="turn" evidence="5">
    <location>
        <begin position="108"/>
        <end position="112"/>
    </location>
</feature>
<feature type="helix" evidence="5">
    <location>
        <begin position="121"/>
        <end position="134"/>
    </location>
</feature>
<proteinExistence type="evidence at protein level"/>
<protein>
    <recommendedName>
        <fullName evidence="3">Ribonuclease YqgF</fullName>
        <ecNumber evidence="1 2">3.1.-.-</ecNumber>
    </recommendedName>
</protein>
<organism>
    <name type="scientific">Deinococcus radiodurans (strain ATCC 13939 / DSM 20539 / JCM 16871 / CCUG 27074 / LMG 4051 / NBRC 15346 / NCIMB 9279 / VKM B-1422 / R1)</name>
    <dbReference type="NCBI Taxonomy" id="243230"/>
    <lineage>
        <taxon>Bacteria</taxon>
        <taxon>Thermotogati</taxon>
        <taxon>Deinococcota</taxon>
        <taxon>Deinococci</taxon>
        <taxon>Deinococcales</taxon>
        <taxon>Deinococcaceae</taxon>
        <taxon>Deinococcus</taxon>
    </lineage>
</organism>
<gene>
    <name evidence="3" type="primary">yqgF</name>
    <name type="ordered locus">DR_2509</name>
</gene>
<evidence type="ECO:0000255" key="1">
    <source>
        <dbReference type="HAMAP-Rule" id="MF_00651"/>
    </source>
</evidence>
<evidence type="ECO:0000269" key="2">
    <source>
    </source>
</evidence>
<evidence type="ECO:0000303" key="3">
    <source>
    </source>
</evidence>
<evidence type="ECO:0000312" key="4">
    <source>
        <dbReference type="PDB" id="7W89"/>
    </source>
</evidence>
<evidence type="ECO:0007829" key="5">
    <source>
        <dbReference type="PDB" id="7W89"/>
    </source>
</evidence>
<accession>Q9RRI2</accession>
<dbReference type="EC" id="3.1.-.-" evidence="1 2"/>
<dbReference type="EMBL" id="AE000513">
    <property type="protein sequence ID" value="AAF12050.1"/>
    <property type="molecule type" value="Genomic_DNA"/>
</dbReference>
<dbReference type="PIR" id="D75265">
    <property type="entry name" value="D75265"/>
</dbReference>
<dbReference type="RefSeq" id="NP_296229.1">
    <property type="nucleotide sequence ID" value="NC_001263.1"/>
</dbReference>
<dbReference type="RefSeq" id="WP_010889134.1">
    <property type="nucleotide sequence ID" value="NC_001263.1"/>
</dbReference>
<dbReference type="PDB" id="7W89">
    <property type="method" value="X-ray"/>
    <property type="resolution" value="1.50 A"/>
    <property type="chains" value="A=1-136"/>
</dbReference>
<dbReference type="PDBsum" id="7W89"/>
<dbReference type="SMR" id="Q9RRI2"/>
<dbReference type="STRING" id="243230.DR_2509"/>
<dbReference type="PaxDb" id="243230-DR_2509"/>
<dbReference type="EnsemblBacteria" id="AAF12050">
    <property type="protein sequence ID" value="AAF12050"/>
    <property type="gene ID" value="DR_2509"/>
</dbReference>
<dbReference type="GeneID" id="69518762"/>
<dbReference type="KEGG" id="dra:DR_2509"/>
<dbReference type="PATRIC" id="fig|243230.17.peg.2750"/>
<dbReference type="eggNOG" id="COG0816">
    <property type="taxonomic scope" value="Bacteria"/>
</dbReference>
<dbReference type="HOGENOM" id="CLU_098240_2_2_0"/>
<dbReference type="InParanoid" id="Q9RRI2"/>
<dbReference type="OrthoDB" id="73995at2"/>
<dbReference type="Proteomes" id="UP000002524">
    <property type="component" value="Chromosome 1"/>
</dbReference>
<dbReference type="GO" id="GO:0005737">
    <property type="term" value="C:cytoplasm"/>
    <property type="evidence" value="ECO:0007669"/>
    <property type="project" value="UniProtKB-SubCell"/>
</dbReference>
<dbReference type="GO" id="GO:0004519">
    <property type="term" value="F:endonuclease activity"/>
    <property type="evidence" value="ECO:0007669"/>
    <property type="project" value="UniProtKB-KW"/>
</dbReference>
<dbReference type="GO" id="GO:0004527">
    <property type="term" value="F:exonuclease activity"/>
    <property type="evidence" value="ECO:0007669"/>
    <property type="project" value="UniProtKB-KW"/>
</dbReference>
<dbReference type="GO" id="GO:0000967">
    <property type="term" value="P:rRNA 5'-end processing"/>
    <property type="evidence" value="ECO:0000318"/>
    <property type="project" value="GO_Central"/>
</dbReference>
<dbReference type="CDD" id="cd16964">
    <property type="entry name" value="YqgF"/>
    <property type="match status" value="1"/>
</dbReference>
<dbReference type="Gene3D" id="3.30.420.140">
    <property type="entry name" value="YqgF/RNase H-like domain"/>
    <property type="match status" value="1"/>
</dbReference>
<dbReference type="HAMAP" id="MF_00651">
    <property type="entry name" value="Nuclease_YqgF"/>
    <property type="match status" value="1"/>
</dbReference>
<dbReference type="InterPro" id="IPR012337">
    <property type="entry name" value="RNaseH-like_sf"/>
</dbReference>
<dbReference type="InterPro" id="IPR005227">
    <property type="entry name" value="YqgF"/>
</dbReference>
<dbReference type="InterPro" id="IPR006641">
    <property type="entry name" value="YqgF/RNaseH-like_dom"/>
</dbReference>
<dbReference type="InterPro" id="IPR037027">
    <property type="entry name" value="YqgF/RNaseH-like_dom_sf"/>
</dbReference>
<dbReference type="NCBIfam" id="TIGR00250">
    <property type="entry name" value="RNAse_H_YqgF"/>
    <property type="match status" value="1"/>
</dbReference>
<dbReference type="PANTHER" id="PTHR33317">
    <property type="entry name" value="POLYNUCLEOTIDYL TRANSFERASE, RIBONUCLEASE H-LIKE SUPERFAMILY PROTEIN"/>
    <property type="match status" value="1"/>
</dbReference>
<dbReference type="PANTHER" id="PTHR33317:SF4">
    <property type="entry name" value="POLYNUCLEOTIDYL TRANSFERASE, RIBONUCLEASE H-LIKE SUPERFAMILY PROTEIN"/>
    <property type="match status" value="1"/>
</dbReference>
<dbReference type="Pfam" id="PF03652">
    <property type="entry name" value="RuvX"/>
    <property type="match status" value="1"/>
</dbReference>
<dbReference type="SMART" id="SM00732">
    <property type="entry name" value="YqgFc"/>
    <property type="match status" value="1"/>
</dbReference>
<dbReference type="SUPFAM" id="SSF53098">
    <property type="entry name" value="Ribonuclease H-like"/>
    <property type="match status" value="1"/>
</dbReference>
<keyword id="KW-0002">3D-structure</keyword>
<keyword id="KW-0963">Cytoplasm</keyword>
<keyword id="KW-0255">Endonuclease</keyword>
<keyword id="KW-0269">Exonuclease</keyword>
<keyword id="KW-0378">Hydrolase</keyword>
<keyword id="KW-0540">Nuclease</keyword>
<keyword id="KW-1185">Reference proteome</keyword>
<keyword id="KW-0690">Ribosome biogenesis</keyword>
<reference key="1">
    <citation type="journal article" date="1999" name="Science">
        <title>Genome sequence of the radioresistant bacterium Deinococcus radiodurans R1.</title>
        <authorList>
            <person name="White O."/>
            <person name="Eisen J.A."/>
            <person name="Heidelberg J.F."/>
            <person name="Hickey E.K."/>
            <person name="Peterson J.D."/>
            <person name="Dodson R.J."/>
            <person name="Haft D.H."/>
            <person name="Gwinn M.L."/>
            <person name="Nelson W.C."/>
            <person name="Richardson D.L."/>
            <person name="Moffat K.S."/>
            <person name="Qin H."/>
            <person name="Jiang L."/>
            <person name="Pamphile W."/>
            <person name="Crosby M."/>
            <person name="Shen M."/>
            <person name="Vamathevan J.J."/>
            <person name="Lam P."/>
            <person name="McDonald L.A."/>
            <person name="Utterback T.R."/>
            <person name="Zalewski C."/>
            <person name="Makarova K.S."/>
            <person name="Aravind L."/>
            <person name="Daly M.J."/>
            <person name="Minton K.W."/>
            <person name="Fleischmann R.D."/>
            <person name="Ketchum K.A."/>
            <person name="Nelson K.E."/>
            <person name="Salzberg S.L."/>
            <person name="Smith H.O."/>
            <person name="Venter J.C."/>
            <person name="Fraser C.M."/>
        </authorList>
    </citation>
    <scope>NUCLEOTIDE SEQUENCE [LARGE SCALE GENOMIC DNA]</scope>
    <source>
        <strain>ATCC 13939 / DSM 20539 / JCM 16871 / CCUG 27074 / LMG 4051 / NBRC 15346 / NCIMB 9279 / VKM B-1422 / R1</strain>
    </source>
</reference>
<reference evidence="4" key="2">
    <citation type="journal article" date="2022" name="MBio">
        <title>Biochemical and Structural Study of RuvC and YqgF from Deinococcus radiodurans.</title>
        <authorList>
            <person name="Sun Y."/>
            <person name="Yang J."/>
            <person name="Xu G."/>
            <person name="Cheng K."/>
        </authorList>
    </citation>
    <scope>X-RAY CRYSTALLOGRAPHY (1.50 ANGSTROMS)</scope>
    <scope>FUNCTION</scope>
    <scope>CATALYTIC ACTIVITY</scope>
    <scope>COFACTOR</scope>
    <scope>SUBUNIT</scope>
    <scope>DISRUPTION PHENOTYPE</scope>
    <scope>MUTAGENESIS OF ASP-22; GLU-106 AND ASP-122</scope>
    <source>
        <strain>ATCC 13939 / DSM 20539 / JCM 16871 / CCUG 27074 / LMG 4051 / NBRC 15346 / NCIMB 9279 / VKM B-1422 / R1</strain>
    </source>
</reference>
<comment type="function">
    <text evidence="2">Has robust sequence-specific RNase activity, acting as a 5'-3' exo/endonuclease on ssRNA substrates with minimally 3 consecutive adenine bases. Has no detectable nuclease activity on dsRNA, dsDNA or Holliday junction DNA.</text>
</comment>
<comment type="cofactor">
    <cofactor evidence="2">
        <name>Mn(2+)</name>
        <dbReference type="ChEBI" id="CHEBI:29035"/>
    </cofactor>
    <text evidence="2">Has no RNase activity in the presence of Mg(2+), Ca(2+) or Zn(2+).</text>
</comment>
<comment type="subunit">
    <text evidence="2">Monomer; also forms low amounts of dimers.</text>
</comment>
<comment type="subcellular location">
    <subcellularLocation>
        <location evidence="1">Cytoplasm</location>
    </subcellularLocation>
</comment>
<comment type="disruption phenotype">
    <text evidence="2">Only heterozygous strains can be obtained, suggesting this gene is essential.</text>
</comment>
<comment type="similarity">
    <text evidence="1">Belongs to the YqgF nuclease family.</text>
</comment>